<gene>
    <name evidence="1" type="primary">sigA</name>
    <name type="synonym">rpoD</name>
    <name type="ordered locus">lmo1454</name>
</gene>
<sequence>MSDKTKNTKPVAELSVEQVKEALIEEGKKKGILTYAKIAARLAPFTLDSDQMDEYLEHVGEAGIEVSDDADDEDPDETELVKEETESFDLTDMSVPPGVKINDPVRMYLKEIGRVDLLTADEEIALAKRIEAGDIEAKGRLAEANLRLVVSIAKRYVGRGMLFLDLIQEGNMGLMKAVEKFDFNKGFKFSTYATWWIRQAITRAIADQARTIRIPVHMVETINKLIRVQRSLLQDLGRDPSPEEIGEEMDLPTEKVREILKIAQEPVSLETPIGEEDDSHLGDFIEDQDATSPSDHAAYELLKEQLEDVLDTLTDREENVLRLRFGLDDGRTRTLEEVGRVFGVTRERIRQIEAKALRKLRHPSRSKQLKDFLE</sequence>
<dbReference type="EMBL" id="U13165">
    <property type="protein sequence ID" value="AAC43306.1"/>
    <property type="molecule type" value="Genomic_DNA"/>
</dbReference>
<dbReference type="EMBL" id="AL591979">
    <property type="protein sequence ID" value="CAC99532.1"/>
    <property type="molecule type" value="Genomic_DNA"/>
</dbReference>
<dbReference type="EMBL" id="U17284">
    <property type="protein sequence ID" value="AAA62500.1"/>
    <property type="molecule type" value="Genomic_DNA"/>
</dbReference>
<dbReference type="PIR" id="AF1256">
    <property type="entry name" value="AF1256"/>
</dbReference>
<dbReference type="RefSeq" id="NP_464979.1">
    <property type="nucleotide sequence ID" value="NC_003210.1"/>
</dbReference>
<dbReference type="RefSeq" id="WP_003721960.1">
    <property type="nucleotide sequence ID" value="NZ_CP149495.1"/>
</dbReference>
<dbReference type="SMR" id="P52331"/>
<dbReference type="STRING" id="169963.gene:17594111"/>
<dbReference type="PaxDb" id="169963-lmo1454"/>
<dbReference type="EnsemblBacteria" id="CAC99532">
    <property type="protein sequence ID" value="CAC99532"/>
    <property type="gene ID" value="CAC99532"/>
</dbReference>
<dbReference type="GeneID" id="93239331"/>
<dbReference type="GeneID" id="984456"/>
<dbReference type="KEGG" id="lmo:lmo1454"/>
<dbReference type="PATRIC" id="fig|169963.11.peg.1493"/>
<dbReference type="eggNOG" id="COG0568">
    <property type="taxonomic scope" value="Bacteria"/>
</dbReference>
<dbReference type="HOGENOM" id="CLU_014793_3_3_9"/>
<dbReference type="OrthoDB" id="9809557at2"/>
<dbReference type="PhylomeDB" id="P52331"/>
<dbReference type="BioCyc" id="LMON169963:LMO1454-MONOMER"/>
<dbReference type="Proteomes" id="UP000000817">
    <property type="component" value="Chromosome"/>
</dbReference>
<dbReference type="GO" id="GO:0005737">
    <property type="term" value="C:cytoplasm"/>
    <property type="evidence" value="ECO:0007669"/>
    <property type="project" value="UniProtKB-SubCell"/>
</dbReference>
<dbReference type="GO" id="GO:0003677">
    <property type="term" value="F:DNA binding"/>
    <property type="evidence" value="ECO:0007669"/>
    <property type="project" value="UniProtKB-UniRule"/>
</dbReference>
<dbReference type="GO" id="GO:0016987">
    <property type="term" value="F:sigma factor activity"/>
    <property type="evidence" value="ECO:0007669"/>
    <property type="project" value="UniProtKB-UniRule"/>
</dbReference>
<dbReference type="GO" id="GO:0006352">
    <property type="term" value="P:DNA-templated transcription initiation"/>
    <property type="evidence" value="ECO:0007669"/>
    <property type="project" value="UniProtKB-UniRule"/>
</dbReference>
<dbReference type="CDD" id="cd06171">
    <property type="entry name" value="Sigma70_r4"/>
    <property type="match status" value="1"/>
</dbReference>
<dbReference type="FunFam" id="1.10.10.10:FF:000002">
    <property type="entry name" value="RNA polymerase sigma factor SigA"/>
    <property type="match status" value="1"/>
</dbReference>
<dbReference type="FunFam" id="1.10.10.10:FF:000004">
    <property type="entry name" value="RNA polymerase sigma factor SigA"/>
    <property type="match status" value="1"/>
</dbReference>
<dbReference type="FunFam" id="1.10.601.10:FF:000001">
    <property type="entry name" value="RNA polymerase sigma factor SigA"/>
    <property type="match status" value="1"/>
</dbReference>
<dbReference type="Gene3D" id="1.10.601.10">
    <property type="entry name" value="RNA Polymerase Primary Sigma Factor"/>
    <property type="match status" value="2"/>
</dbReference>
<dbReference type="Gene3D" id="1.10.220.120">
    <property type="entry name" value="Sigma-70 factor, region 1.1"/>
    <property type="match status" value="1"/>
</dbReference>
<dbReference type="Gene3D" id="1.10.10.10">
    <property type="entry name" value="Winged helix-like DNA-binding domain superfamily/Winged helix DNA-binding domain"/>
    <property type="match status" value="2"/>
</dbReference>
<dbReference type="HAMAP" id="MF_00963">
    <property type="entry name" value="Sigma70_RpoD_SigA"/>
    <property type="match status" value="1"/>
</dbReference>
<dbReference type="InterPro" id="IPR014284">
    <property type="entry name" value="RNA_pol_sigma-70_dom"/>
</dbReference>
<dbReference type="InterPro" id="IPR000943">
    <property type="entry name" value="RNA_pol_sigma70"/>
</dbReference>
<dbReference type="InterPro" id="IPR009042">
    <property type="entry name" value="RNA_pol_sigma70_r1_2"/>
</dbReference>
<dbReference type="InterPro" id="IPR007627">
    <property type="entry name" value="RNA_pol_sigma70_r2"/>
</dbReference>
<dbReference type="InterPro" id="IPR007624">
    <property type="entry name" value="RNA_pol_sigma70_r3"/>
</dbReference>
<dbReference type="InterPro" id="IPR007630">
    <property type="entry name" value="RNA_pol_sigma70_r4"/>
</dbReference>
<dbReference type="InterPro" id="IPR007127">
    <property type="entry name" value="RNA_pol_sigma_70_r1_1"/>
</dbReference>
<dbReference type="InterPro" id="IPR042189">
    <property type="entry name" value="RNA_pol_sigma_70_r1_1_sf"/>
</dbReference>
<dbReference type="InterPro" id="IPR013325">
    <property type="entry name" value="RNA_pol_sigma_r2"/>
</dbReference>
<dbReference type="InterPro" id="IPR013324">
    <property type="entry name" value="RNA_pol_sigma_r3/r4-like"/>
</dbReference>
<dbReference type="InterPro" id="IPR012760">
    <property type="entry name" value="RNA_pol_sigma_RpoD_C"/>
</dbReference>
<dbReference type="InterPro" id="IPR050239">
    <property type="entry name" value="Sigma-70_RNA_pol_init_factors"/>
</dbReference>
<dbReference type="InterPro" id="IPR028630">
    <property type="entry name" value="Sigma70_RpoD"/>
</dbReference>
<dbReference type="InterPro" id="IPR036388">
    <property type="entry name" value="WH-like_DNA-bd_sf"/>
</dbReference>
<dbReference type="NCBIfam" id="NF006666">
    <property type="entry name" value="PRK09210.1"/>
    <property type="match status" value="1"/>
</dbReference>
<dbReference type="NCBIfam" id="TIGR02393">
    <property type="entry name" value="RpoD_Cterm"/>
    <property type="match status" value="1"/>
</dbReference>
<dbReference type="NCBIfam" id="TIGR02937">
    <property type="entry name" value="sigma70-ECF"/>
    <property type="match status" value="1"/>
</dbReference>
<dbReference type="PANTHER" id="PTHR30603">
    <property type="entry name" value="RNA POLYMERASE SIGMA FACTOR RPO"/>
    <property type="match status" value="1"/>
</dbReference>
<dbReference type="PANTHER" id="PTHR30603:SF60">
    <property type="entry name" value="RNA POLYMERASE SIGMA FACTOR RPOD"/>
    <property type="match status" value="1"/>
</dbReference>
<dbReference type="Pfam" id="PF03979">
    <property type="entry name" value="Sigma70_r1_1"/>
    <property type="match status" value="1"/>
</dbReference>
<dbReference type="Pfam" id="PF00140">
    <property type="entry name" value="Sigma70_r1_2"/>
    <property type="match status" value="1"/>
</dbReference>
<dbReference type="Pfam" id="PF04542">
    <property type="entry name" value="Sigma70_r2"/>
    <property type="match status" value="1"/>
</dbReference>
<dbReference type="Pfam" id="PF04539">
    <property type="entry name" value="Sigma70_r3"/>
    <property type="match status" value="1"/>
</dbReference>
<dbReference type="Pfam" id="PF04545">
    <property type="entry name" value="Sigma70_r4"/>
    <property type="match status" value="1"/>
</dbReference>
<dbReference type="PRINTS" id="PR00046">
    <property type="entry name" value="SIGMA70FCT"/>
</dbReference>
<dbReference type="SUPFAM" id="SSF88946">
    <property type="entry name" value="Sigma2 domain of RNA polymerase sigma factors"/>
    <property type="match status" value="1"/>
</dbReference>
<dbReference type="SUPFAM" id="SSF88659">
    <property type="entry name" value="Sigma3 and sigma4 domains of RNA polymerase sigma factors"/>
    <property type="match status" value="2"/>
</dbReference>
<dbReference type="PROSITE" id="PS00715">
    <property type="entry name" value="SIGMA70_1"/>
    <property type="match status" value="1"/>
</dbReference>
<dbReference type="PROSITE" id="PS00716">
    <property type="entry name" value="SIGMA70_2"/>
    <property type="match status" value="1"/>
</dbReference>
<feature type="chain" id="PRO_0000093897" description="RNA polymerase sigma factor SigA">
    <location>
        <begin position="1"/>
        <end position="374"/>
    </location>
</feature>
<feature type="DNA-binding region" description="H-T-H motif" evidence="1">
    <location>
        <begin position="335"/>
        <end position="354"/>
    </location>
</feature>
<feature type="region of interest" description="Sigma-70 factor domain-2" evidence="1">
    <location>
        <begin position="141"/>
        <end position="211"/>
    </location>
</feature>
<feature type="region of interest" description="Sigma-70 factor domain-3" evidence="1">
    <location>
        <begin position="220"/>
        <end position="296"/>
    </location>
</feature>
<feature type="region of interest" description="Sigma-70 factor domain-4" evidence="1">
    <location>
        <begin position="309"/>
        <end position="362"/>
    </location>
</feature>
<feature type="short sequence motif" description="Interaction with polymerase core subunit RpoC">
    <location>
        <begin position="165"/>
        <end position="168"/>
    </location>
</feature>
<reference key="1">
    <citation type="journal article" date="1994" name="Gene">
        <title>Characterization of the macromolecular synthesis (MMS) operon from Listeria monocytogenes.</title>
        <authorList>
            <person name="Metzger R."/>
            <person name="Brown D.P."/>
            <person name="Grealish P."/>
            <person name="Staver M.J."/>
            <person name="Versalovic J."/>
            <person name="Lupski J.R."/>
            <person name="Katz L."/>
        </authorList>
    </citation>
    <scope>NUCLEOTIDE SEQUENCE [GENOMIC DNA]</scope>
    <source>
        <strain>ATCC 13932 / LMG 21264 / NCTC 10527 / SLCC 2375</strain>
    </source>
</reference>
<reference key="2">
    <citation type="journal article" date="2001" name="Science">
        <title>Comparative genomics of Listeria species.</title>
        <authorList>
            <person name="Glaser P."/>
            <person name="Frangeul L."/>
            <person name="Buchrieser C."/>
            <person name="Rusniok C."/>
            <person name="Amend A."/>
            <person name="Baquero F."/>
            <person name="Berche P."/>
            <person name="Bloecker H."/>
            <person name="Brandt P."/>
            <person name="Chakraborty T."/>
            <person name="Charbit A."/>
            <person name="Chetouani F."/>
            <person name="Couve E."/>
            <person name="de Daruvar A."/>
            <person name="Dehoux P."/>
            <person name="Domann E."/>
            <person name="Dominguez-Bernal G."/>
            <person name="Duchaud E."/>
            <person name="Durant L."/>
            <person name="Dussurget O."/>
            <person name="Entian K.-D."/>
            <person name="Fsihi H."/>
            <person name="Garcia-del Portillo F."/>
            <person name="Garrido P."/>
            <person name="Gautier L."/>
            <person name="Goebel W."/>
            <person name="Gomez-Lopez N."/>
            <person name="Hain T."/>
            <person name="Hauf J."/>
            <person name="Jackson D."/>
            <person name="Jones L.-M."/>
            <person name="Kaerst U."/>
            <person name="Kreft J."/>
            <person name="Kuhn M."/>
            <person name="Kunst F."/>
            <person name="Kurapkat G."/>
            <person name="Madueno E."/>
            <person name="Maitournam A."/>
            <person name="Mata Vicente J."/>
            <person name="Ng E."/>
            <person name="Nedjari H."/>
            <person name="Nordsiek G."/>
            <person name="Novella S."/>
            <person name="de Pablos B."/>
            <person name="Perez-Diaz J.-C."/>
            <person name="Purcell R."/>
            <person name="Remmel B."/>
            <person name="Rose M."/>
            <person name="Schlueter T."/>
            <person name="Simoes N."/>
            <person name="Tierrez A."/>
            <person name="Vazquez-Boland J.-A."/>
            <person name="Voss H."/>
            <person name="Wehland J."/>
            <person name="Cossart P."/>
        </authorList>
    </citation>
    <scope>NUCLEOTIDE SEQUENCE [LARGE SCALE GENOMIC DNA]</scope>
    <source>
        <strain>ATCC BAA-679 / EGD-e</strain>
    </source>
</reference>
<reference key="3">
    <citation type="submission" date="1995-03" db="EMBL/GenBank/DDBJ databases">
        <authorList>
            <person name="Klarsfeld A.D."/>
            <person name="Cossart P."/>
        </authorList>
    </citation>
    <scope>NUCLEOTIDE SEQUENCE [GENOMIC DNA] OF 356-374</scope>
    <source>
        <strain>LO28 / Serovar 1/2c</strain>
    </source>
</reference>
<organism>
    <name type="scientific">Listeria monocytogenes serovar 1/2a (strain ATCC BAA-679 / EGD-e)</name>
    <dbReference type="NCBI Taxonomy" id="169963"/>
    <lineage>
        <taxon>Bacteria</taxon>
        <taxon>Bacillati</taxon>
        <taxon>Bacillota</taxon>
        <taxon>Bacilli</taxon>
        <taxon>Bacillales</taxon>
        <taxon>Listeriaceae</taxon>
        <taxon>Listeria</taxon>
    </lineage>
</organism>
<protein>
    <recommendedName>
        <fullName evidence="1">RNA polymerase sigma factor SigA</fullName>
    </recommendedName>
    <alternativeName>
        <fullName>Sigma-43</fullName>
    </alternativeName>
</protein>
<proteinExistence type="inferred from homology"/>
<name>SIGA_LISMO</name>
<accession>P52331</accession>
<keyword id="KW-0963">Cytoplasm</keyword>
<keyword id="KW-0238">DNA-binding</keyword>
<keyword id="KW-1185">Reference proteome</keyword>
<keyword id="KW-0731">Sigma factor</keyword>
<keyword id="KW-0804">Transcription</keyword>
<keyword id="KW-0805">Transcription regulation</keyword>
<comment type="function">
    <text evidence="1">Sigma factors are initiation factors that promote the attachment of RNA polymerase to specific initiation sites and are then released. This sigma factor is the primary sigma factor during exponential growth.</text>
</comment>
<comment type="subunit">
    <text evidence="1">Interacts transiently with the RNA polymerase catalytic core.</text>
</comment>
<comment type="subcellular location">
    <subcellularLocation>
        <location evidence="1">Cytoplasm</location>
    </subcellularLocation>
</comment>
<comment type="similarity">
    <text evidence="1">Belongs to the sigma-70 factor family. RpoD/SigA subfamily.</text>
</comment>
<evidence type="ECO:0000255" key="1">
    <source>
        <dbReference type="HAMAP-Rule" id="MF_00963"/>
    </source>
</evidence>